<feature type="chain" id="PRO_0000174093" description="Parasporal crystal protein Cry18Ca">
    <location>
        <begin position="1"/>
        <end position="695"/>
    </location>
</feature>
<gene>
    <name type="primary">cry18Ca</name>
    <name type="synonym">cryXVIIIC(a)</name>
</gene>
<accession>P57092</accession>
<reference key="1">
    <citation type="submission" date="1999-07" db="EMBL/GenBank/DDBJ databases">
        <title>Detection of two new cry genes in Paenibacillus popilliae.</title>
        <authorList>
            <person name="Patel R."/>
            <person name="Yousten A.A."/>
            <person name="Rippere K."/>
        </authorList>
    </citation>
    <scope>NUCLEOTIDE SEQUENCE [GENOMIC DNA]</scope>
    <source>
        <strain>ATCC 14706 / DSM 2047 / BCRC 14650 / CIP 106066 / NCCB 75017 / NRRL B-2309</strain>
    </source>
</reference>
<proteinExistence type="evidence at transcript level"/>
<dbReference type="EMBL" id="AF169251">
    <property type="protein sequence ID" value="AAF89668.1"/>
    <property type="molecule type" value="Genomic_DNA"/>
</dbReference>
<dbReference type="SMR" id="P57092"/>
<dbReference type="GO" id="GO:0005102">
    <property type="term" value="F:signaling receptor binding"/>
    <property type="evidence" value="ECO:0007669"/>
    <property type="project" value="InterPro"/>
</dbReference>
<dbReference type="GO" id="GO:0090729">
    <property type="term" value="F:toxin activity"/>
    <property type="evidence" value="ECO:0007669"/>
    <property type="project" value="UniProtKB-KW"/>
</dbReference>
<dbReference type="GO" id="GO:0030435">
    <property type="term" value="P:sporulation resulting in formation of a cellular spore"/>
    <property type="evidence" value="ECO:0007669"/>
    <property type="project" value="UniProtKB-KW"/>
</dbReference>
<dbReference type="GO" id="GO:0001907">
    <property type="term" value="P:symbiont-mediated killing of host cell"/>
    <property type="evidence" value="ECO:0007669"/>
    <property type="project" value="InterPro"/>
</dbReference>
<dbReference type="Gene3D" id="2.60.120.260">
    <property type="entry name" value="Galactose-binding domain-like"/>
    <property type="match status" value="1"/>
</dbReference>
<dbReference type="Gene3D" id="2.100.10.10">
    <property type="entry name" value="Pesticidal crystal protein, central domain"/>
    <property type="match status" value="2"/>
</dbReference>
<dbReference type="Gene3D" id="1.20.190.10">
    <property type="entry name" value="Pesticidal crystal protein, N-terminal domain"/>
    <property type="match status" value="1"/>
</dbReference>
<dbReference type="InterPro" id="IPR008979">
    <property type="entry name" value="Galactose-bd-like_sf"/>
</dbReference>
<dbReference type="InterPro" id="IPR038979">
    <property type="entry name" value="Pest_crys"/>
</dbReference>
<dbReference type="InterPro" id="IPR005638">
    <property type="entry name" value="Pest_crys_dom-III"/>
</dbReference>
<dbReference type="InterPro" id="IPR005639">
    <property type="entry name" value="Pest_crys_dom_I"/>
</dbReference>
<dbReference type="InterPro" id="IPR036716">
    <property type="entry name" value="Pest_crys_N_sf"/>
</dbReference>
<dbReference type="InterPro" id="IPR015214">
    <property type="entry name" value="Pest_cryst_cen_dom_Cry2A/18"/>
</dbReference>
<dbReference type="InterPro" id="IPR036399">
    <property type="entry name" value="Pest_cryst_cen_dom_sf"/>
</dbReference>
<dbReference type="PANTHER" id="PTHR37003">
    <property type="entry name" value="ENDOTOXIN_N DOMAIN-CONTAINING PROTEIN-RELATED"/>
    <property type="match status" value="1"/>
</dbReference>
<dbReference type="PANTHER" id="PTHR37003:SF2">
    <property type="entry name" value="PESTICIDAL CRYSTAL PROTEIN N-TERMINAL DOMAIN-CONTAINING PROTEIN"/>
    <property type="match status" value="1"/>
</dbReference>
<dbReference type="Pfam" id="PF03944">
    <property type="entry name" value="Endotoxin_C"/>
    <property type="match status" value="1"/>
</dbReference>
<dbReference type="Pfam" id="PF09131">
    <property type="entry name" value="Endotoxin_mid"/>
    <property type="match status" value="1"/>
</dbReference>
<dbReference type="Pfam" id="PF03945">
    <property type="entry name" value="Endotoxin_N"/>
    <property type="match status" value="1"/>
</dbReference>
<dbReference type="SUPFAM" id="SSF51096">
    <property type="entry name" value="delta-Endotoxin (insectocide), middle domain"/>
    <property type="match status" value="1"/>
</dbReference>
<dbReference type="SUPFAM" id="SSF56849">
    <property type="entry name" value="delta-Endotoxin (insectocide), N-terminal domain"/>
    <property type="match status" value="1"/>
</dbReference>
<dbReference type="SUPFAM" id="SSF49785">
    <property type="entry name" value="Galactose-binding domain-like"/>
    <property type="match status" value="1"/>
</dbReference>
<protein>
    <recommendedName>
        <fullName>Parasporal crystal protein Cry18Ca</fullName>
    </recommendedName>
    <alternativeName>
        <fullName>78 kDa crystal protein</fullName>
    </alternativeName>
    <alternativeName>
        <fullName>Crystaline parasporal protoxin</fullName>
    </alternativeName>
    <alternativeName>
        <fullName>Parasporal delta-endotoxin CryXVIIIC(a)</fullName>
    </alternativeName>
</protein>
<keyword id="KW-0749">Sporulation</keyword>
<keyword id="KW-0800">Toxin</keyword>
<keyword id="KW-0843">Virulence</keyword>
<evidence type="ECO:0000250" key="1"/>
<evidence type="ECO:0000305" key="2"/>
<organism>
    <name type="scientific">Paenibacillus popilliae</name>
    <name type="common">Bacillus popilliae</name>
    <dbReference type="NCBI Taxonomy" id="78057"/>
    <lineage>
        <taxon>Bacteria</taxon>
        <taxon>Bacillati</taxon>
        <taxon>Bacillota</taxon>
        <taxon>Bacilli</taxon>
        <taxon>Bacillales</taxon>
        <taxon>Paenibacillaceae</taxon>
        <taxon>Paenibacillus</taxon>
    </lineage>
</organism>
<name>C18CA_PAEPP</name>
<sequence>MNNYFIGKVLSGHHINNNGNGNTLSRTALTPTNNNVNRGDLVTNGLTPIDNNFIGSNGFIPRNVTRKDPFRKRTTQEFIREWTEWKEKSASLFTAPIVGVITSTLLEALKKLVAGRVLMSLTNLLFPNNSTSTMEEILRATEQYIQEQLDTVTWNRVSQELEGLKNDLRTFNDQIDDFLQNRVGISPLAIIDSINTMQQLFVNRLPQFQVSDDQVLLLPLFAQAVTLHLTFVRDIIINADEWNIPEAQLNTYKRYLKQYVAQYSNYALSTYEEAFRARFYPRNTVENMLEFKTFMTLNVLDLVSMWSLLKYVNLYVSTSANLYNIGDNKVNEGEYSISYWPFFNTYIQTKSNYVLSGVSGYAMRWSYTNPFFGEYIQDHLYNITASYIGGVNGPQIGQQLSTTELDQLVQQQARADIPVDFTQIPINCTLRNPLEVPYYATRFNELTSLGTAGVGGFVRSDVFISNDSVCGLGTNYSSGQTFYPDYYITNISATVQVNGTNTDISPLYFGENRAITSTNGVNKVIAIYNRKTNYDDFTNIRGTIVHEAPTDSTGFTISPLHLDTVNINSYLYIQENYGNNGDSLRVINRAIIKYRLSAARSVIYRLVLRVSGTASSIVAIYENYPVGSANQINTGTDNEGVIDNDSKFIDLIFNTPFSVSGTARELQLQVSGATTSSPLDIMNIILIPINDVPLY</sequence>
<comment type="function">
    <text evidence="1">Binds to the brush border membrane vesicles of scarab larvae and damages the gut wall somehow to allow the vegetative cells of P.popilliae to enter the hemolymph.</text>
</comment>
<comment type="developmental stage">
    <text>The crystal protein is produced during sporulation and is accumulated both as an inclusion and as part of the spore coat.</text>
</comment>
<comment type="similarity">
    <text evidence="2">Belongs to the delta endotoxin family.</text>
</comment>